<gene>
    <name evidence="1 2" type="primary">gvpA</name>
    <name type="ordered locus">BRADO1282</name>
</gene>
<organism>
    <name type="scientific">Bradyrhizobium sp. (strain ORS 278)</name>
    <dbReference type="NCBI Taxonomy" id="114615"/>
    <lineage>
        <taxon>Bacteria</taxon>
        <taxon>Pseudomonadati</taxon>
        <taxon>Pseudomonadota</taxon>
        <taxon>Alphaproteobacteria</taxon>
        <taxon>Hyphomicrobiales</taxon>
        <taxon>Nitrobacteraceae</taxon>
        <taxon>Bradyrhizobium</taxon>
    </lineage>
</organism>
<feature type="chain" id="PRO_1000025105" description="Gas vesicle protein A">
    <location>
        <begin position="1"/>
        <end position="70"/>
    </location>
</feature>
<evidence type="ECO:0000255" key="1">
    <source>
        <dbReference type="HAMAP-Rule" id="MF_00576"/>
    </source>
</evidence>
<evidence type="ECO:0000303" key="2">
    <source>
    </source>
</evidence>
<reference key="1">
    <citation type="journal article" date="2007" name="Science">
        <title>Legumes symbioses: absence of nod genes in photosynthetic bradyrhizobia.</title>
        <authorList>
            <person name="Giraud E."/>
            <person name="Moulin L."/>
            <person name="Vallenet D."/>
            <person name="Barbe V."/>
            <person name="Cytryn E."/>
            <person name="Avarre J.-C."/>
            <person name="Jaubert M."/>
            <person name="Simon D."/>
            <person name="Cartieaux F."/>
            <person name="Prin Y."/>
            <person name="Bena G."/>
            <person name="Hannibal L."/>
            <person name="Fardoux J."/>
            <person name="Kojadinovic M."/>
            <person name="Vuillet L."/>
            <person name="Lajus A."/>
            <person name="Cruveiller S."/>
            <person name="Rouy Z."/>
            <person name="Mangenot S."/>
            <person name="Segurens B."/>
            <person name="Dossat C."/>
            <person name="Franck W.L."/>
            <person name="Chang W.-S."/>
            <person name="Saunders E."/>
            <person name="Bruce D."/>
            <person name="Richardson P."/>
            <person name="Normand P."/>
            <person name="Dreyfus B."/>
            <person name="Pignol D."/>
            <person name="Stacey G."/>
            <person name="Emerich D."/>
            <person name="Vermeglio A."/>
            <person name="Medigue C."/>
            <person name="Sadowsky M."/>
        </authorList>
    </citation>
    <scope>NUCLEOTIDE SEQUENCE [LARGE SCALE GENOMIC DNA]</scope>
    <source>
        <strain>ORS 278</strain>
    </source>
</reference>
<comment type="function">
    <text evidence="1">Gas vesicles are hollow, gas filled proteinaceous nanostructures found in some microorganisms. During planktonic growth they allow positioning of the organism at a favorable depth for light or nutrient acquisition. GvpA forms the protein shell.</text>
</comment>
<comment type="subunit">
    <text evidence="1">The gas vesicle shell is 2 nm thick and consists of a single layer of this protein. It forms helical ribs nearly perpendicular to the long axis of the vesicle.</text>
</comment>
<comment type="subcellular location">
    <subcellularLocation>
        <location evidence="1">Gas vesicle shell</location>
    </subcellularLocation>
</comment>
<comment type="similarity">
    <text evidence="1">Belongs to the gas vesicle GvpA family.</text>
</comment>
<dbReference type="EMBL" id="CU234118">
    <property type="protein sequence ID" value="CAL75183.1"/>
    <property type="molecule type" value="Genomic_DNA"/>
</dbReference>
<dbReference type="RefSeq" id="WP_011924420.1">
    <property type="nucleotide sequence ID" value="NC_009445.1"/>
</dbReference>
<dbReference type="SMR" id="A4YMQ7"/>
<dbReference type="STRING" id="114615.BRADO1282"/>
<dbReference type="KEGG" id="bra:BRADO1282"/>
<dbReference type="eggNOG" id="ENOG5032YMQ">
    <property type="taxonomic scope" value="Bacteria"/>
</dbReference>
<dbReference type="HOGENOM" id="CLU_169045_1_0_5"/>
<dbReference type="OrthoDB" id="284387at2"/>
<dbReference type="Proteomes" id="UP000001994">
    <property type="component" value="Chromosome"/>
</dbReference>
<dbReference type="GO" id="GO:0033172">
    <property type="term" value="C:gas vesicle shell"/>
    <property type="evidence" value="ECO:0007669"/>
    <property type="project" value="UniProtKB-UniRule"/>
</dbReference>
<dbReference type="GO" id="GO:0012506">
    <property type="term" value="C:vesicle membrane"/>
    <property type="evidence" value="ECO:0007669"/>
    <property type="project" value="InterPro"/>
</dbReference>
<dbReference type="GO" id="GO:0005198">
    <property type="term" value="F:structural molecule activity"/>
    <property type="evidence" value="ECO:0007669"/>
    <property type="project" value="InterPro"/>
</dbReference>
<dbReference type="HAMAP" id="MF_00576">
    <property type="entry name" value="Gas_vesicle_A"/>
    <property type="match status" value="1"/>
</dbReference>
<dbReference type="InterPro" id="IPR000638">
    <property type="entry name" value="Gas-vesicle_GvpA-like"/>
</dbReference>
<dbReference type="InterPro" id="IPR047870">
    <property type="entry name" value="Gas_vesicle_GvpA"/>
</dbReference>
<dbReference type="InterPro" id="IPR050530">
    <property type="entry name" value="GvpA"/>
</dbReference>
<dbReference type="InterPro" id="IPR018493">
    <property type="entry name" value="GvpA-like_CS"/>
</dbReference>
<dbReference type="NCBIfam" id="NF006874">
    <property type="entry name" value="PRK09371.1"/>
    <property type="match status" value="1"/>
</dbReference>
<dbReference type="PANTHER" id="PTHR35344:SF4">
    <property type="entry name" value="GAS VESICLE PROTEIN A1"/>
    <property type="match status" value="1"/>
</dbReference>
<dbReference type="PANTHER" id="PTHR35344">
    <property type="entry name" value="GAS VESICLE STRUCTURAL PROTEIN 2-RELATED"/>
    <property type="match status" value="1"/>
</dbReference>
<dbReference type="Pfam" id="PF00741">
    <property type="entry name" value="Gas_vesicle"/>
    <property type="match status" value="1"/>
</dbReference>
<dbReference type="PROSITE" id="PS00234">
    <property type="entry name" value="GAS_VESICLE_A_1"/>
    <property type="match status" value="1"/>
</dbReference>
<dbReference type="PROSITE" id="PS00669">
    <property type="entry name" value="GAS_VESICLE_A_2"/>
    <property type="match status" value="1"/>
</dbReference>
<accession>A4YMQ7</accession>
<keyword id="KW-0304">Gas vesicle</keyword>
<keyword id="KW-1185">Reference proteome</keyword>
<name>GVPA_BRASO</name>
<protein>
    <recommendedName>
        <fullName evidence="1">Gas vesicle protein A</fullName>
        <shortName evidence="1">GvpA</shortName>
    </recommendedName>
</protein>
<proteinExistence type="inferred from homology"/>
<sequence length="70" mass="7353">MAIEKSIASSSIAEVIDRVLDKGVVIDAFVRVALVGIELIAIEARVVIASVETWLKYAEAIGLTAQPSAA</sequence>